<accession>Q8NZ22</accession>
<feature type="chain" id="PRO_0000151623" description="Arginine--tRNA ligase">
    <location>
        <begin position="1"/>
        <end position="563"/>
    </location>
</feature>
<feature type="short sequence motif" description="'HIGH' region">
    <location>
        <begin position="121"/>
        <end position="131"/>
    </location>
</feature>
<dbReference type="EC" id="6.1.1.19" evidence="1"/>
<dbReference type="EMBL" id="AE009949">
    <property type="protein sequence ID" value="AAL98627.1"/>
    <property type="molecule type" value="Genomic_DNA"/>
</dbReference>
<dbReference type="RefSeq" id="WP_011018320.1">
    <property type="nucleotide sequence ID" value="NC_003485.1"/>
</dbReference>
<dbReference type="SMR" id="Q8NZ22"/>
<dbReference type="KEGG" id="spm:spyM18_2183"/>
<dbReference type="HOGENOM" id="CLU_006406_6_1_9"/>
<dbReference type="GO" id="GO:0005737">
    <property type="term" value="C:cytoplasm"/>
    <property type="evidence" value="ECO:0007669"/>
    <property type="project" value="UniProtKB-SubCell"/>
</dbReference>
<dbReference type="GO" id="GO:0004814">
    <property type="term" value="F:arginine-tRNA ligase activity"/>
    <property type="evidence" value="ECO:0007669"/>
    <property type="project" value="UniProtKB-UniRule"/>
</dbReference>
<dbReference type="GO" id="GO:0005524">
    <property type="term" value="F:ATP binding"/>
    <property type="evidence" value="ECO:0007669"/>
    <property type="project" value="UniProtKB-UniRule"/>
</dbReference>
<dbReference type="GO" id="GO:0006420">
    <property type="term" value="P:arginyl-tRNA aminoacylation"/>
    <property type="evidence" value="ECO:0007669"/>
    <property type="project" value="UniProtKB-UniRule"/>
</dbReference>
<dbReference type="CDD" id="cd07956">
    <property type="entry name" value="Anticodon_Ia_Arg"/>
    <property type="match status" value="1"/>
</dbReference>
<dbReference type="CDD" id="cd00671">
    <property type="entry name" value="ArgRS_core"/>
    <property type="match status" value="1"/>
</dbReference>
<dbReference type="FunFam" id="3.40.50.620:FF:000116">
    <property type="entry name" value="Arginine--tRNA ligase"/>
    <property type="match status" value="1"/>
</dbReference>
<dbReference type="FunFam" id="1.10.730.10:FF:000006">
    <property type="entry name" value="Arginyl-tRNA synthetase 2, mitochondrial"/>
    <property type="match status" value="1"/>
</dbReference>
<dbReference type="Gene3D" id="3.30.1360.70">
    <property type="entry name" value="Arginyl tRNA synthetase N-terminal domain"/>
    <property type="match status" value="1"/>
</dbReference>
<dbReference type="Gene3D" id="3.40.50.620">
    <property type="entry name" value="HUPs"/>
    <property type="match status" value="1"/>
</dbReference>
<dbReference type="Gene3D" id="1.10.730.10">
    <property type="entry name" value="Isoleucyl-tRNA Synthetase, Domain 1"/>
    <property type="match status" value="1"/>
</dbReference>
<dbReference type="HAMAP" id="MF_00123">
    <property type="entry name" value="Arg_tRNA_synth"/>
    <property type="match status" value="1"/>
</dbReference>
<dbReference type="InterPro" id="IPR001278">
    <property type="entry name" value="Arg-tRNA-ligase"/>
</dbReference>
<dbReference type="InterPro" id="IPR005148">
    <property type="entry name" value="Arg-tRNA-synth_N"/>
</dbReference>
<dbReference type="InterPro" id="IPR036695">
    <property type="entry name" value="Arg-tRNA-synth_N_sf"/>
</dbReference>
<dbReference type="InterPro" id="IPR035684">
    <property type="entry name" value="ArgRS_core"/>
</dbReference>
<dbReference type="InterPro" id="IPR008909">
    <property type="entry name" value="DALR_anticod-bd"/>
</dbReference>
<dbReference type="InterPro" id="IPR014729">
    <property type="entry name" value="Rossmann-like_a/b/a_fold"/>
</dbReference>
<dbReference type="InterPro" id="IPR009080">
    <property type="entry name" value="tRNAsynth_Ia_anticodon-bd"/>
</dbReference>
<dbReference type="NCBIfam" id="TIGR00456">
    <property type="entry name" value="argS"/>
    <property type="match status" value="1"/>
</dbReference>
<dbReference type="PANTHER" id="PTHR11956:SF5">
    <property type="entry name" value="ARGININE--TRNA LIGASE, CYTOPLASMIC"/>
    <property type="match status" value="1"/>
</dbReference>
<dbReference type="PANTHER" id="PTHR11956">
    <property type="entry name" value="ARGINYL-TRNA SYNTHETASE"/>
    <property type="match status" value="1"/>
</dbReference>
<dbReference type="Pfam" id="PF03485">
    <property type="entry name" value="Arg_tRNA_synt_N"/>
    <property type="match status" value="1"/>
</dbReference>
<dbReference type="Pfam" id="PF05746">
    <property type="entry name" value="DALR_1"/>
    <property type="match status" value="1"/>
</dbReference>
<dbReference type="Pfam" id="PF00750">
    <property type="entry name" value="tRNA-synt_1d"/>
    <property type="match status" value="1"/>
</dbReference>
<dbReference type="PRINTS" id="PR01038">
    <property type="entry name" value="TRNASYNTHARG"/>
</dbReference>
<dbReference type="SMART" id="SM01016">
    <property type="entry name" value="Arg_tRNA_synt_N"/>
    <property type="match status" value="1"/>
</dbReference>
<dbReference type="SMART" id="SM00836">
    <property type="entry name" value="DALR_1"/>
    <property type="match status" value="1"/>
</dbReference>
<dbReference type="SUPFAM" id="SSF47323">
    <property type="entry name" value="Anticodon-binding domain of a subclass of class I aminoacyl-tRNA synthetases"/>
    <property type="match status" value="1"/>
</dbReference>
<dbReference type="SUPFAM" id="SSF55190">
    <property type="entry name" value="Arginyl-tRNA synthetase (ArgRS), N-terminal 'additional' domain"/>
    <property type="match status" value="1"/>
</dbReference>
<dbReference type="SUPFAM" id="SSF52374">
    <property type="entry name" value="Nucleotidylyl transferase"/>
    <property type="match status" value="1"/>
</dbReference>
<sequence>MDTKTLIASEIAKVVPELEQDAIFNLLETPKNSDMGDLAFPAFSLAKVLRKAPQMIASELAEQIDESQFEKVVAVGPYINFFLDKAKISSQVLEQVITAGSDYAQQDEGQGRNVAIDMSSPNIAKPFSIGHLRSTVIGDSLAHIFAKMGYQPVKINHLGDWGKQFGMLIVAYKKWGDEAAVQAHPIDELLKLYVRINAEAETDPTIDEEAREWFRKLEDGDKEATELWQWFRDESLLEFNRLYDQLHVTFDSYNGEAFYNDKMDEVLDLLEAKNLLVESKGAQVVNLEKYGIEHPALIKKSDGATLYITRDLAAALYRKRTYDFAKSVYVVGNEQAAHFKQLKAVLKEMGYDWSDDMTHVAFGLVTKGGAKLSTRKGNVILLEPTVAEAINRAASQIEAKNPNLADKEAVAHAVGVGAIKFYDLKTDRMNGYDFDLEAMVSFEGETGPYVQYAHARIQSILRKADFTPSATTTYSLADAESWEIIKLIQDFPRIIKRTSDNFEPSIMAKFAINLAQSFNKYYAHTRILDDNSERDNRLALCYATATVLKEALRLLGVDAPNEM</sequence>
<evidence type="ECO:0000255" key="1">
    <source>
        <dbReference type="HAMAP-Rule" id="MF_00123"/>
    </source>
</evidence>
<reference key="1">
    <citation type="journal article" date="2002" name="Proc. Natl. Acad. Sci. U.S.A.">
        <title>Genome sequence and comparative microarray analysis of serotype M18 group A Streptococcus strains associated with acute rheumatic fever outbreaks.</title>
        <authorList>
            <person name="Smoot J.C."/>
            <person name="Barbian K.D."/>
            <person name="Van Gompel J.J."/>
            <person name="Smoot L.M."/>
            <person name="Chaussee M.S."/>
            <person name="Sylva G.L."/>
            <person name="Sturdevant D.E."/>
            <person name="Ricklefs S.M."/>
            <person name="Porcella S.F."/>
            <person name="Parkins L.D."/>
            <person name="Beres S.B."/>
            <person name="Campbell D.S."/>
            <person name="Smith T.M."/>
            <person name="Zhang Q."/>
            <person name="Kapur V."/>
            <person name="Daly J.A."/>
            <person name="Veasy L.G."/>
            <person name="Musser J.M."/>
        </authorList>
    </citation>
    <scope>NUCLEOTIDE SEQUENCE [LARGE SCALE GENOMIC DNA]</scope>
    <source>
        <strain>MGAS8232</strain>
    </source>
</reference>
<name>SYR_STRP8</name>
<protein>
    <recommendedName>
        <fullName evidence="1">Arginine--tRNA ligase</fullName>
        <ecNumber evidence="1">6.1.1.19</ecNumber>
    </recommendedName>
    <alternativeName>
        <fullName evidence="1">Arginyl-tRNA synthetase</fullName>
        <shortName evidence="1">ArgRS</shortName>
    </alternativeName>
</protein>
<organism>
    <name type="scientific">Streptococcus pyogenes serotype M18 (strain MGAS8232)</name>
    <dbReference type="NCBI Taxonomy" id="186103"/>
    <lineage>
        <taxon>Bacteria</taxon>
        <taxon>Bacillati</taxon>
        <taxon>Bacillota</taxon>
        <taxon>Bacilli</taxon>
        <taxon>Lactobacillales</taxon>
        <taxon>Streptococcaceae</taxon>
        <taxon>Streptococcus</taxon>
    </lineage>
</organism>
<proteinExistence type="inferred from homology"/>
<keyword id="KW-0030">Aminoacyl-tRNA synthetase</keyword>
<keyword id="KW-0067">ATP-binding</keyword>
<keyword id="KW-0963">Cytoplasm</keyword>
<keyword id="KW-0436">Ligase</keyword>
<keyword id="KW-0547">Nucleotide-binding</keyword>
<keyword id="KW-0648">Protein biosynthesis</keyword>
<gene>
    <name evidence="1" type="primary">argS</name>
    <name type="ordered locus">spyM18_2183</name>
</gene>
<comment type="catalytic activity">
    <reaction evidence="1">
        <text>tRNA(Arg) + L-arginine + ATP = L-arginyl-tRNA(Arg) + AMP + diphosphate</text>
        <dbReference type="Rhea" id="RHEA:20301"/>
        <dbReference type="Rhea" id="RHEA-COMP:9658"/>
        <dbReference type="Rhea" id="RHEA-COMP:9673"/>
        <dbReference type="ChEBI" id="CHEBI:30616"/>
        <dbReference type="ChEBI" id="CHEBI:32682"/>
        <dbReference type="ChEBI" id="CHEBI:33019"/>
        <dbReference type="ChEBI" id="CHEBI:78442"/>
        <dbReference type="ChEBI" id="CHEBI:78513"/>
        <dbReference type="ChEBI" id="CHEBI:456215"/>
        <dbReference type="EC" id="6.1.1.19"/>
    </reaction>
</comment>
<comment type="subunit">
    <text evidence="1">Monomer.</text>
</comment>
<comment type="subcellular location">
    <subcellularLocation>
        <location evidence="1">Cytoplasm</location>
    </subcellularLocation>
</comment>
<comment type="similarity">
    <text evidence="1">Belongs to the class-I aminoacyl-tRNA synthetase family.</text>
</comment>